<gene>
    <name type="primary">Prss35</name>
</gene>
<organism>
    <name type="scientific">Mus musculus</name>
    <name type="common">Mouse</name>
    <dbReference type="NCBI Taxonomy" id="10090"/>
    <lineage>
        <taxon>Eukaryota</taxon>
        <taxon>Metazoa</taxon>
        <taxon>Chordata</taxon>
        <taxon>Craniata</taxon>
        <taxon>Vertebrata</taxon>
        <taxon>Euteleostomi</taxon>
        <taxon>Mammalia</taxon>
        <taxon>Eutheria</taxon>
        <taxon>Euarchontoglires</taxon>
        <taxon>Glires</taxon>
        <taxon>Rodentia</taxon>
        <taxon>Myomorpha</taxon>
        <taxon>Muroidea</taxon>
        <taxon>Muridae</taxon>
        <taxon>Murinae</taxon>
        <taxon>Mus</taxon>
        <taxon>Mus</taxon>
    </lineage>
</organism>
<evidence type="ECO:0000250" key="1"/>
<evidence type="ECO:0000255" key="2"/>
<evidence type="ECO:0000256" key="3">
    <source>
        <dbReference type="SAM" id="MobiDB-lite"/>
    </source>
</evidence>
<evidence type="ECO:0000269" key="4">
    <source>
    </source>
</evidence>
<evidence type="ECO:0000305" key="5"/>
<comment type="subcellular location">
    <subcellularLocation>
        <location evidence="5">Secreted</location>
    </subcellularLocation>
</comment>
<comment type="tissue specificity">
    <text evidence="4">In ovary, it localizes to the theca cells of pre-antral follicles, the theca and granulosa cells of pre-ovulatory and ovulatory follicles, as well as to the developing corpus luteum.</text>
</comment>
<comment type="developmental stage">
    <text evidence="4">Increases around the time of ovulation and remained elevated in the developing corpus luteum.</text>
</comment>
<comment type="induction">
    <text evidence="4">Expression is progesterone-dependent regulation prior to follicle rupture.</text>
</comment>
<comment type="similarity">
    <text evidence="5">Belongs to the peptidase S1 family.</text>
</comment>
<comment type="caution">
    <text evidence="5">Although related to peptidase S1 family, lacks the conserved active Ser residue in position 342 which is replaced by a Thr, suggesting that it has no protease activity.</text>
</comment>
<proteinExistence type="evidence at transcript level"/>
<accession>Q8C0F9</accession>
<accession>Q8C0D6</accession>
<accession>Q8C0L5</accession>
<keyword id="KW-1015">Disulfide bond</keyword>
<keyword id="KW-0325">Glycoprotein</keyword>
<keyword id="KW-1185">Reference proteome</keyword>
<keyword id="KW-0964">Secreted</keyword>
<keyword id="KW-0721">Serine protease homolog</keyword>
<keyword id="KW-0732">Signal</keyword>
<feature type="signal peptide" evidence="2">
    <location>
        <begin position="1"/>
        <end position="20"/>
    </location>
</feature>
<feature type="chain" id="PRO_0000299360" description="Inactive serine protease 35">
    <location>
        <begin position="21"/>
        <end position="409"/>
    </location>
</feature>
<feature type="domain" description="Peptidase S1">
    <location>
        <begin position="124"/>
        <end position="404"/>
    </location>
</feature>
<feature type="region of interest" description="Disordered" evidence="3">
    <location>
        <begin position="188"/>
        <end position="247"/>
    </location>
</feature>
<feature type="compositionally biased region" description="Basic residues" evidence="3">
    <location>
        <begin position="188"/>
        <end position="207"/>
    </location>
</feature>
<feature type="glycosylation site" description="N-linked (GlcNAc...) asparagine" evidence="2">
    <location>
        <position position="90"/>
    </location>
</feature>
<feature type="disulfide bond" evidence="1">
    <location>
        <begin position="154"/>
        <end position="170"/>
    </location>
</feature>
<feature type="sequence conflict" description="In Ref. 2; BAC27491." evidence="5" ref="2">
    <original>H</original>
    <variation>N</variation>
    <location>
        <position position="169"/>
    </location>
</feature>
<feature type="sequence conflict" description="In Ref. 2; BAC27073." evidence="5" ref="2">
    <original>G</original>
    <variation>S</variation>
    <location>
        <position position="266"/>
    </location>
</feature>
<feature type="sequence conflict" description="In Ref. 2; BAC27491." evidence="5" ref="2">
    <original>R</original>
    <variation>Q</variation>
    <location>
        <position position="302"/>
    </location>
</feature>
<feature type="sequence conflict" description="In Ref. 2; BAC27073." evidence="5" ref="2">
    <original>V</original>
    <variation>E</variation>
    <location>
        <position position="383"/>
    </location>
</feature>
<protein>
    <recommendedName>
        <fullName>Inactive serine protease 35</fullName>
    </recommendedName>
</protein>
<dbReference type="EMBL" id="DQ223037">
    <property type="protein sequence ID" value="ABB46197.1"/>
    <property type="molecule type" value="mRNA"/>
</dbReference>
<dbReference type="EMBL" id="AK030671">
    <property type="protein sequence ID" value="BAC27073.1"/>
    <property type="molecule type" value="mRNA"/>
</dbReference>
<dbReference type="EMBL" id="AK031411">
    <property type="protein sequence ID" value="BAC27392.1"/>
    <property type="molecule type" value="mRNA"/>
</dbReference>
<dbReference type="EMBL" id="AK031644">
    <property type="protein sequence ID" value="BAC27491.1"/>
    <property type="molecule type" value="mRNA"/>
</dbReference>
<dbReference type="EMBL" id="BC075675">
    <property type="protein sequence ID" value="AAH75675.1"/>
    <property type="molecule type" value="mRNA"/>
</dbReference>
<dbReference type="CCDS" id="CCDS40714.1"/>
<dbReference type="RefSeq" id="NP_848853.2">
    <property type="nucleotide sequence ID" value="NM_178738.3"/>
</dbReference>
<dbReference type="RefSeq" id="XP_006511233.1">
    <property type="nucleotide sequence ID" value="XM_006511170.5"/>
</dbReference>
<dbReference type="RefSeq" id="XP_006511234.1">
    <property type="nucleotide sequence ID" value="XM_006511171.5"/>
</dbReference>
<dbReference type="RefSeq" id="XP_006511235.1">
    <property type="nucleotide sequence ID" value="XM_006511172.3"/>
</dbReference>
<dbReference type="RefSeq" id="XP_036010902.1">
    <property type="nucleotide sequence ID" value="XM_036155009.1"/>
</dbReference>
<dbReference type="FunCoup" id="Q8C0F9">
    <property type="interactions" value="651"/>
</dbReference>
<dbReference type="STRING" id="10090.ENSMUSP00000035271"/>
<dbReference type="MEROPS" id="S01.994"/>
<dbReference type="GlyCosmos" id="Q8C0F9">
    <property type="glycosylation" value="1 site, No reported glycans"/>
</dbReference>
<dbReference type="GlyGen" id="Q8C0F9">
    <property type="glycosylation" value="1 site"/>
</dbReference>
<dbReference type="PhosphoSitePlus" id="Q8C0F9"/>
<dbReference type="jPOST" id="Q8C0F9"/>
<dbReference type="PaxDb" id="10090-ENSMUSP00000035271"/>
<dbReference type="ProteomicsDB" id="291902"/>
<dbReference type="Antibodypedia" id="31685">
    <property type="antibodies" value="74 antibodies from 19 providers"/>
</dbReference>
<dbReference type="DNASU" id="244954"/>
<dbReference type="Ensembl" id="ENSMUST00000036426.13">
    <property type="protein sequence ID" value="ENSMUSP00000035271.7"/>
    <property type="gene ID" value="ENSMUSG00000033491.15"/>
</dbReference>
<dbReference type="GeneID" id="244954"/>
<dbReference type="KEGG" id="mmu:244954"/>
<dbReference type="UCSC" id="uc012gxu.1">
    <property type="organism name" value="mouse"/>
</dbReference>
<dbReference type="AGR" id="MGI:2444800"/>
<dbReference type="CTD" id="167681"/>
<dbReference type="MGI" id="MGI:2444800">
    <property type="gene designation" value="Prss35"/>
</dbReference>
<dbReference type="VEuPathDB" id="HostDB:ENSMUSG00000033491"/>
<dbReference type="eggNOG" id="ENOG502QV0K">
    <property type="taxonomic scope" value="Eukaryota"/>
</dbReference>
<dbReference type="GeneTree" id="ENSGT00390000000155"/>
<dbReference type="HOGENOM" id="CLU_055829_0_0_1"/>
<dbReference type="InParanoid" id="Q8C0F9"/>
<dbReference type="OMA" id="MEQDFMW"/>
<dbReference type="OrthoDB" id="10037376at2759"/>
<dbReference type="PhylomeDB" id="Q8C0F9"/>
<dbReference type="TreeFam" id="TF329011"/>
<dbReference type="BioGRID-ORCS" id="244954">
    <property type="hits" value="2 hits in 78 CRISPR screens"/>
</dbReference>
<dbReference type="PRO" id="PR:Q8C0F9"/>
<dbReference type="Proteomes" id="UP000000589">
    <property type="component" value="Chromosome 9"/>
</dbReference>
<dbReference type="RNAct" id="Q8C0F9">
    <property type="molecule type" value="protein"/>
</dbReference>
<dbReference type="Bgee" id="ENSMUSG00000033491">
    <property type="expression patterns" value="Expressed in adrenal gland and 118 other cell types or tissues"/>
</dbReference>
<dbReference type="GO" id="GO:0005576">
    <property type="term" value="C:extracellular region"/>
    <property type="evidence" value="ECO:0007669"/>
    <property type="project" value="UniProtKB-SubCell"/>
</dbReference>
<dbReference type="GO" id="GO:0005739">
    <property type="term" value="C:mitochondrion"/>
    <property type="evidence" value="ECO:0007005"/>
    <property type="project" value="MGI"/>
</dbReference>
<dbReference type="GO" id="GO:0004252">
    <property type="term" value="F:serine-type endopeptidase activity"/>
    <property type="evidence" value="ECO:0007669"/>
    <property type="project" value="InterPro"/>
</dbReference>
<dbReference type="Gene3D" id="2.40.10.10">
    <property type="entry name" value="Trypsin-like serine proteases"/>
    <property type="match status" value="4"/>
</dbReference>
<dbReference type="InterPro" id="IPR050966">
    <property type="entry name" value="Glutamyl_endopeptidase"/>
</dbReference>
<dbReference type="InterPro" id="IPR009003">
    <property type="entry name" value="Peptidase_S1_PA"/>
</dbReference>
<dbReference type="InterPro" id="IPR043504">
    <property type="entry name" value="Peptidase_S1_PA_chymotrypsin"/>
</dbReference>
<dbReference type="InterPro" id="IPR001254">
    <property type="entry name" value="Trypsin_dom"/>
</dbReference>
<dbReference type="InterPro" id="IPR018114">
    <property type="entry name" value="TRYPSIN_HIS"/>
</dbReference>
<dbReference type="PANTHER" id="PTHR15462:SF17">
    <property type="entry name" value="INACTIVE SERINE PROTEASE 35"/>
    <property type="match status" value="1"/>
</dbReference>
<dbReference type="PANTHER" id="PTHR15462">
    <property type="entry name" value="SERINE PROTEASE"/>
    <property type="match status" value="1"/>
</dbReference>
<dbReference type="Pfam" id="PF00089">
    <property type="entry name" value="Trypsin"/>
    <property type="match status" value="1"/>
</dbReference>
<dbReference type="SUPFAM" id="SSF50494">
    <property type="entry name" value="Trypsin-like serine proteases"/>
    <property type="match status" value="1"/>
</dbReference>
<dbReference type="PROSITE" id="PS00134">
    <property type="entry name" value="TRYPSIN_HIS"/>
    <property type="match status" value="1"/>
</dbReference>
<name>PRS35_MOUSE</name>
<reference key="1">
    <citation type="journal article" date="2006" name="Biol. Reprod.">
        <title>The identification of novel ovarian proteases through the use of genomic and bioinformatic methodologies.</title>
        <authorList>
            <person name="Miyakoshi K."/>
            <person name="Murphy M.J."/>
            <person name="Yeoman R.R."/>
            <person name="Mitra S."/>
            <person name="Dubay C.J."/>
            <person name="Hennebold J.D."/>
        </authorList>
    </citation>
    <scope>NUCLEOTIDE SEQUENCE [MRNA]</scope>
    <scope>TISSUE SPECIFICITY</scope>
    <scope>DEVELOPMENTAL STAGE</scope>
    <scope>INDUCTION</scope>
    <source>
        <strain>C57BL/6J</strain>
        <tissue>Ovary</tissue>
    </source>
</reference>
<reference key="2">
    <citation type="journal article" date="2005" name="Science">
        <title>The transcriptional landscape of the mammalian genome.</title>
        <authorList>
            <person name="Carninci P."/>
            <person name="Kasukawa T."/>
            <person name="Katayama S."/>
            <person name="Gough J."/>
            <person name="Frith M.C."/>
            <person name="Maeda N."/>
            <person name="Oyama R."/>
            <person name="Ravasi T."/>
            <person name="Lenhard B."/>
            <person name="Wells C."/>
            <person name="Kodzius R."/>
            <person name="Shimokawa K."/>
            <person name="Bajic V.B."/>
            <person name="Brenner S.E."/>
            <person name="Batalov S."/>
            <person name="Forrest A.R."/>
            <person name="Zavolan M."/>
            <person name="Davis M.J."/>
            <person name="Wilming L.G."/>
            <person name="Aidinis V."/>
            <person name="Allen J.E."/>
            <person name="Ambesi-Impiombato A."/>
            <person name="Apweiler R."/>
            <person name="Aturaliya R.N."/>
            <person name="Bailey T.L."/>
            <person name="Bansal M."/>
            <person name="Baxter L."/>
            <person name="Beisel K.W."/>
            <person name="Bersano T."/>
            <person name="Bono H."/>
            <person name="Chalk A.M."/>
            <person name="Chiu K.P."/>
            <person name="Choudhary V."/>
            <person name="Christoffels A."/>
            <person name="Clutterbuck D.R."/>
            <person name="Crowe M.L."/>
            <person name="Dalla E."/>
            <person name="Dalrymple B.P."/>
            <person name="de Bono B."/>
            <person name="Della Gatta G."/>
            <person name="di Bernardo D."/>
            <person name="Down T."/>
            <person name="Engstrom P."/>
            <person name="Fagiolini M."/>
            <person name="Faulkner G."/>
            <person name="Fletcher C.F."/>
            <person name="Fukushima T."/>
            <person name="Furuno M."/>
            <person name="Futaki S."/>
            <person name="Gariboldi M."/>
            <person name="Georgii-Hemming P."/>
            <person name="Gingeras T.R."/>
            <person name="Gojobori T."/>
            <person name="Green R.E."/>
            <person name="Gustincich S."/>
            <person name="Harbers M."/>
            <person name="Hayashi Y."/>
            <person name="Hensch T.K."/>
            <person name="Hirokawa N."/>
            <person name="Hill D."/>
            <person name="Huminiecki L."/>
            <person name="Iacono M."/>
            <person name="Ikeo K."/>
            <person name="Iwama A."/>
            <person name="Ishikawa T."/>
            <person name="Jakt M."/>
            <person name="Kanapin A."/>
            <person name="Katoh M."/>
            <person name="Kawasawa Y."/>
            <person name="Kelso J."/>
            <person name="Kitamura H."/>
            <person name="Kitano H."/>
            <person name="Kollias G."/>
            <person name="Krishnan S.P."/>
            <person name="Kruger A."/>
            <person name="Kummerfeld S.K."/>
            <person name="Kurochkin I.V."/>
            <person name="Lareau L.F."/>
            <person name="Lazarevic D."/>
            <person name="Lipovich L."/>
            <person name="Liu J."/>
            <person name="Liuni S."/>
            <person name="McWilliam S."/>
            <person name="Madan Babu M."/>
            <person name="Madera M."/>
            <person name="Marchionni L."/>
            <person name="Matsuda H."/>
            <person name="Matsuzawa S."/>
            <person name="Miki H."/>
            <person name="Mignone F."/>
            <person name="Miyake S."/>
            <person name="Morris K."/>
            <person name="Mottagui-Tabar S."/>
            <person name="Mulder N."/>
            <person name="Nakano N."/>
            <person name="Nakauchi H."/>
            <person name="Ng P."/>
            <person name="Nilsson R."/>
            <person name="Nishiguchi S."/>
            <person name="Nishikawa S."/>
            <person name="Nori F."/>
            <person name="Ohara O."/>
            <person name="Okazaki Y."/>
            <person name="Orlando V."/>
            <person name="Pang K.C."/>
            <person name="Pavan W.J."/>
            <person name="Pavesi G."/>
            <person name="Pesole G."/>
            <person name="Petrovsky N."/>
            <person name="Piazza S."/>
            <person name="Reed J."/>
            <person name="Reid J.F."/>
            <person name="Ring B.Z."/>
            <person name="Ringwald M."/>
            <person name="Rost B."/>
            <person name="Ruan Y."/>
            <person name="Salzberg S.L."/>
            <person name="Sandelin A."/>
            <person name="Schneider C."/>
            <person name="Schoenbach C."/>
            <person name="Sekiguchi K."/>
            <person name="Semple C.A."/>
            <person name="Seno S."/>
            <person name="Sessa L."/>
            <person name="Sheng Y."/>
            <person name="Shibata Y."/>
            <person name="Shimada H."/>
            <person name="Shimada K."/>
            <person name="Silva D."/>
            <person name="Sinclair B."/>
            <person name="Sperling S."/>
            <person name="Stupka E."/>
            <person name="Sugiura K."/>
            <person name="Sultana R."/>
            <person name="Takenaka Y."/>
            <person name="Taki K."/>
            <person name="Tammoja K."/>
            <person name="Tan S.L."/>
            <person name="Tang S."/>
            <person name="Taylor M.S."/>
            <person name="Tegner J."/>
            <person name="Teichmann S.A."/>
            <person name="Ueda H.R."/>
            <person name="van Nimwegen E."/>
            <person name="Verardo R."/>
            <person name="Wei C.L."/>
            <person name="Yagi K."/>
            <person name="Yamanishi H."/>
            <person name="Zabarovsky E."/>
            <person name="Zhu S."/>
            <person name="Zimmer A."/>
            <person name="Hide W."/>
            <person name="Bult C."/>
            <person name="Grimmond S.M."/>
            <person name="Teasdale R.D."/>
            <person name="Liu E.T."/>
            <person name="Brusic V."/>
            <person name="Quackenbush J."/>
            <person name="Wahlestedt C."/>
            <person name="Mattick J.S."/>
            <person name="Hume D.A."/>
            <person name="Kai C."/>
            <person name="Sasaki D."/>
            <person name="Tomaru Y."/>
            <person name="Fukuda S."/>
            <person name="Kanamori-Katayama M."/>
            <person name="Suzuki M."/>
            <person name="Aoki J."/>
            <person name="Arakawa T."/>
            <person name="Iida J."/>
            <person name="Imamura K."/>
            <person name="Itoh M."/>
            <person name="Kato T."/>
            <person name="Kawaji H."/>
            <person name="Kawagashira N."/>
            <person name="Kawashima T."/>
            <person name="Kojima M."/>
            <person name="Kondo S."/>
            <person name="Konno H."/>
            <person name="Nakano K."/>
            <person name="Ninomiya N."/>
            <person name="Nishio T."/>
            <person name="Okada M."/>
            <person name="Plessy C."/>
            <person name="Shibata K."/>
            <person name="Shiraki T."/>
            <person name="Suzuki S."/>
            <person name="Tagami M."/>
            <person name="Waki K."/>
            <person name="Watahiki A."/>
            <person name="Okamura-Oho Y."/>
            <person name="Suzuki H."/>
            <person name="Kawai J."/>
            <person name="Hayashizaki Y."/>
        </authorList>
    </citation>
    <scope>NUCLEOTIDE SEQUENCE [LARGE SCALE MRNA]</scope>
    <source>
        <strain>C57BL/6J</strain>
        <tissue>Head</tissue>
        <tissue>Testis</tissue>
    </source>
</reference>
<reference key="3">
    <citation type="journal article" date="2004" name="Genome Res.">
        <title>The status, quality, and expansion of the NIH full-length cDNA project: the Mammalian Gene Collection (MGC).</title>
        <authorList>
            <consortium name="The MGC Project Team"/>
        </authorList>
    </citation>
    <scope>NUCLEOTIDE SEQUENCE [LARGE SCALE MRNA]</scope>
    <source>
        <strain>C57BL/6J</strain>
        <tissue>Eye</tissue>
    </source>
</reference>
<sequence>MENTLLWLVILIPGWALSDGSETELDFTWHLSRIPQVVSENTIHLASPTFQADAGVVKATVCGIECQEELPAPSLSQLEESLSYETIFENGTRTLTRVKVQGLVLEPTRNSSVKGAHPRRRRQVYGTDSRFSILDKRFATNFPFNTAVKLSTGCSGTLVSPNHVLTAAHCVHDGKDYVKGSKKLRVGVLKMRNKGGRKKRRGSKRSRREAESAGQSQAHLRESTTQRPGKKSRRGPRVTQGRPSFQWTRVKSTHIPKGWVRGENGGLALDYDYALLELKRAHKQQHMELGVSPTITKLPGGRIHFSGFDNDRDEQLVYRFCSVSEESNDLLYQYCDAEAGSTGSGIYLRLKEPGQKNWKRKIVAVYSGHQWVDVHGVQKDYNVAVRITPLKYAQICLWIHGNAANCAYG</sequence>